<protein>
    <recommendedName>
        <fullName evidence="1">Ribonuclease P protein component</fullName>
        <shortName evidence="1">RNase P protein</shortName>
        <shortName evidence="1">RNaseP protein</shortName>
        <ecNumber evidence="1">3.1.26.5</ecNumber>
    </recommendedName>
    <alternativeName>
        <fullName evidence="1">Protein C5</fullName>
    </alternativeName>
</protein>
<accession>Q2VZ17</accession>
<dbReference type="EC" id="3.1.26.5" evidence="1"/>
<dbReference type="EMBL" id="AP007255">
    <property type="protein sequence ID" value="BAE53158.1"/>
    <property type="molecule type" value="Genomic_DNA"/>
</dbReference>
<dbReference type="RefSeq" id="WP_011386701.1">
    <property type="nucleotide sequence ID" value="NC_007626.1"/>
</dbReference>
<dbReference type="SMR" id="Q2VZ17"/>
<dbReference type="STRING" id="342108.amb4354"/>
<dbReference type="KEGG" id="mag:amb4354"/>
<dbReference type="HOGENOM" id="CLU_117179_6_3_5"/>
<dbReference type="OrthoDB" id="9810867at2"/>
<dbReference type="Proteomes" id="UP000007058">
    <property type="component" value="Chromosome"/>
</dbReference>
<dbReference type="GO" id="GO:0030677">
    <property type="term" value="C:ribonuclease P complex"/>
    <property type="evidence" value="ECO:0007669"/>
    <property type="project" value="TreeGrafter"/>
</dbReference>
<dbReference type="GO" id="GO:0042781">
    <property type="term" value="F:3'-tRNA processing endoribonuclease activity"/>
    <property type="evidence" value="ECO:0007669"/>
    <property type="project" value="TreeGrafter"/>
</dbReference>
<dbReference type="GO" id="GO:0004526">
    <property type="term" value="F:ribonuclease P activity"/>
    <property type="evidence" value="ECO:0007669"/>
    <property type="project" value="UniProtKB-UniRule"/>
</dbReference>
<dbReference type="GO" id="GO:0000049">
    <property type="term" value="F:tRNA binding"/>
    <property type="evidence" value="ECO:0007669"/>
    <property type="project" value="UniProtKB-UniRule"/>
</dbReference>
<dbReference type="GO" id="GO:0001682">
    <property type="term" value="P:tRNA 5'-leader removal"/>
    <property type="evidence" value="ECO:0007669"/>
    <property type="project" value="UniProtKB-UniRule"/>
</dbReference>
<dbReference type="Gene3D" id="3.30.230.10">
    <property type="match status" value="1"/>
</dbReference>
<dbReference type="HAMAP" id="MF_00227">
    <property type="entry name" value="RNase_P"/>
    <property type="match status" value="1"/>
</dbReference>
<dbReference type="InterPro" id="IPR020568">
    <property type="entry name" value="Ribosomal_Su5_D2-typ_SF"/>
</dbReference>
<dbReference type="InterPro" id="IPR014721">
    <property type="entry name" value="Ribsml_uS5_D2-typ_fold_subgr"/>
</dbReference>
<dbReference type="InterPro" id="IPR000100">
    <property type="entry name" value="RNase_P"/>
</dbReference>
<dbReference type="NCBIfam" id="TIGR00188">
    <property type="entry name" value="rnpA"/>
    <property type="match status" value="1"/>
</dbReference>
<dbReference type="PANTHER" id="PTHR33992">
    <property type="entry name" value="RIBONUCLEASE P PROTEIN COMPONENT"/>
    <property type="match status" value="1"/>
</dbReference>
<dbReference type="PANTHER" id="PTHR33992:SF1">
    <property type="entry name" value="RIBONUCLEASE P PROTEIN COMPONENT"/>
    <property type="match status" value="1"/>
</dbReference>
<dbReference type="Pfam" id="PF00825">
    <property type="entry name" value="Ribonuclease_P"/>
    <property type="match status" value="1"/>
</dbReference>
<dbReference type="SUPFAM" id="SSF54211">
    <property type="entry name" value="Ribosomal protein S5 domain 2-like"/>
    <property type="match status" value="1"/>
</dbReference>
<reference key="1">
    <citation type="journal article" date="2005" name="DNA Res.">
        <title>Complete genome sequence of the facultative anaerobic magnetotactic bacterium Magnetospirillum sp. strain AMB-1.</title>
        <authorList>
            <person name="Matsunaga T."/>
            <person name="Okamura Y."/>
            <person name="Fukuda Y."/>
            <person name="Wahyudi A.T."/>
            <person name="Murase Y."/>
            <person name="Takeyama H."/>
        </authorList>
    </citation>
    <scope>NUCLEOTIDE SEQUENCE [LARGE SCALE GENOMIC DNA]</scope>
    <source>
        <strain>ATCC 700264 / AMB-1</strain>
    </source>
</reference>
<gene>
    <name evidence="1" type="primary">rnpA</name>
    <name type="ordered locus">amb4354</name>
</gene>
<proteinExistence type="inferred from homology"/>
<organism>
    <name type="scientific">Paramagnetospirillum magneticum (strain ATCC 700264 / AMB-1)</name>
    <name type="common">Magnetospirillum magneticum</name>
    <dbReference type="NCBI Taxonomy" id="342108"/>
    <lineage>
        <taxon>Bacteria</taxon>
        <taxon>Pseudomonadati</taxon>
        <taxon>Pseudomonadota</taxon>
        <taxon>Alphaproteobacteria</taxon>
        <taxon>Rhodospirillales</taxon>
        <taxon>Magnetospirillaceae</taxon>
        <taxon>Paramagnetospirillum</taxon>
    </lineage>
</organism>
<evidence type="ECO:0000255" key="1">
    <source>
        <dbReference type="HAMAP-Rule" id="MF_00227"/>
    </source>
</evidence>
<comment type="function">
    <text evidence="1">RNaseP catalyzes the removal of the 5'-leader sequence from pre-tRNA to produce the mature 5'-terminus. It can also cleave other RNA substrates such as 4.5S RNA. The protein component plays an auxiliary but essential role in vivo by binding to the 5'-leader sequence and broadening the substrate specificity of the ribozyme.</text>
</comment>
<comment type="catalytic activity">
    <reaction evidence="1">
        <text>Endonucleolytic cleavage of RNA, removing 5'-extranucleotides from tRNA precursor.</text>
        <dbReference type="EC" id="3.1.26.5"/>
    </reaction>
</comment>
<comment type="subunit">
    <text evidence="1">Consists of a catalytic RNA component (M1 or rnpB) and a protein subunit.</text>
</comment>
<comment type="similarity">
    <text evidence="1">Belongs to the RnpA family.</text>
</comment>
<keyword id="KW-0255">Endonuclease</keyword>
<keyword id="KW-0378">Hydrolase</keyword>
<keyword id="KW-0540">Nuclease</keyword>
<keyword id="KW-0694">RNA-binding</keyword>
<keyword id="KW-0819">tRNA processing</keyword>
<sequence length="133" mass="14469">MAARLDRLKKRADFLRVAALRRKWAAPGLILQAAPASGTDLQADSLRVGFTVSKKVGNSVCRNRARRRLREAVAQVFPAHASAGLDYVVIGRKETLERPYSLLLQDLLAALKRVGALQKTHAAEAPDTASPQS</sequence>
<name>RNPA_PARM1</name>
<feature type="chain" id="PRO_1000071781" description="Ribonuclease P protein component">
    <location>
        <begin position="1"/>
        <end position="133"/>
    </location>
</feature>